<accession>Q8Y652</accession>
<reference key="1">
    <citation type="journal article" date="2001" name="Science">
        <title>Comparative genomics of Listeria species.</title>
        <authorList>
            <person name="Glaser P."/>
            <person name="Frangeul L."/>
            <person name="Buchrieser C."/>
            <person name="Rusniok C."/>
            <person name="Amend A."/>
            <person name="Baquero F."/>
            <person name="Berche P."/>
            <person name="Bloecker H."/>
            <person name="Brandt P."/>
            <person name="Chakraborty T."/>
            <person name="Charbit A."/>
            <person name="Chetouani F."/>
            <person name="Couve E."/>
            <person name="de Daruvar A."/>
            <person name="Dehoux P."/>
            <person name="Domann E."/>
            <person name="Dominguez-Bernal G."/>
            <person name="Duchaud E."/>
            <person name="Durant L."/>
            <person name="Dussurget O."/>
            <person name="Entian K.-D."/>
            <person name="Fsihi H."/>
            <person name="Garcia-del Portillo F."/>
            <person name="Garrido P."/>
            <person name="Gautier L."/>
            <person name="Goebel W."/>
            <person name="Gomez-Lopez N."/>
            <person name="Hain T."/>
            <person name="Hauf J."/>
            <person name="Jackson D."/>
            <person name="Jones L.-M."/>
            <person name="Kaerst U."/>
            <person name="Kreft J."/>
            <person name="Kuhn M."/>
            <person name="Kunst F."/>
            <person name="Kurapkat G."/>
            <person name="Madueno E."/>
            <person name="Maitournam A."/>
            <person name="Mata Vicente J."/>
            <person name="Ng E."/>
            <person name="Nedjari H."/>
            <person name="Nordsiek G."/>
            <person name="Novella S."/>
            <person name="de Pablos B."/>
            <person name="Perez-Diaz J.-C."/>
            <person name="Purcell R."/>
            <person name="Remmel B."/>
            <person name="Rose M."/>
            <person name="Schlueter T."/>
            <person name="Simoes N."/>
            <person name="Tierrez A."/>
            <person name="Vazquez-Boland J.-A."/>
            <person name="Voss H."/>
            <person name="Wehland J."/>
            <person name="Cossart P."/>
        </authorList>
    </citation>
    <scope>NUCLEOTIDE SEQUENCE [LARGE SCALE GENOMIC DNA]</scope>
    <source>
        <strain>ATCC BAA-679 / EGD-e</strain>
    </source>
</reference>
<keyword id="KW-1003">Cell membrane</keyword>
<keyword id="KW-0406">Ion transport</keyword>
<keyword id="KW-0472">Membrane</keyword>
<keyword id="KW-1185">Reference proteome</keyword>
<keyword id="KW-0812">Transmembrane</keyword>
<keyword id="KW-1133">Transmembrane helix</keyword>
<keyword id="KW-0813">Transport</keyword>
<dbReference type="EMBL" id="AL591981">
    <property type="protein sequence ID" value="CAC99926.1"/>
    <property type="molecule type" value="Genomic_DNA"/>
</dbReference>
<dbReference type="PIR" id="AH1305">
    <property type="entry name" value="AH1305"/>
</dbReference>
<dbReference type="RefSeq" id="NP_465373.1">
    <property type="nucleotide sequence ID" value="NC_003210.1"/>
</dbReference>
<dbReference type="RefSeq" id="WP_003728286.1">
    <property type="nucleotide sequence ID" value="NZ_CP149495.1"/>
</dbReference>
<dbReference type="SMR" id="Q8Y652"/>
<dbReference type="STRING" id="169963.gene:17594533"/>
<dbReference type="PaxDb" id="169963-lmo1848"/>
<dbReference type="EnsemblBacteria" id="CAC99926">
    <property type="protein sequence ID" value="CAC99926"/>
    <property type="gene ID" value="CAC99926"/>
</dbReference>
<dbReference type="GeneID" id="985850"/>
<dbReference type="KEGG" id="lmo:lmo1848"/>
<dbReference type="PATRIC" id="fig|169963.11.peg.1893"/>
<dbReference type="eggNOG" id="COG1108">
    <property type="taxonomic scope" value="Bacteria"/>
</dbReference>
<dbReference type="HOGENOM" id="CLU_028808_4_0_9"/>
<dbReference type="OrthoDB" id="9788905at2"/>
<dbReference type="PhylomeDB" id="Q8Y652"/>
<dbReference type="BioCyc" id="LMON169963:LMO1848-MONOMER"/>
<dbReference type="Proteomes" id="UP000000817">
    <property type="component" value="Chromosome"/>
</dbReference>
<dbReference type="GO" id="GO:0043190">
    <property type="term" value="C:ATP-binding cassette (ABC) transporter complex"/>
    <property type="evidence" value="ECO:0007669"/>
    <property type="project" value="InterPro"/>
</dbReference>
<dbReference type="GO" id="GO:0005886">
    <property type="term" value="C:plasma membrane"/>
    <property type="evidence" value="ECO:0000318"/>
    <property type="project" value="GO_Central"/>
</dbReference>
<dbReference type="GO" id="GO:0006811">
    <property type="term" value="P:monoatomic ion transport"/>
    <property type="evidence" value="ECO:0007669"/>
    <property type="project" value="UniProtKB-KW"/>
</dbReference>
<dbReference type="GO" id="GO:0010043">
    <property type="term" value="P:response to zinc ion"/>
    <property type="evidence" value="ECO:0000318"/>
    <property type="project" value="GO_Central"/>
</dbReference>
<dbReference type="GO" id="GO:0055085">
    <property type="term" value="P:transmembrane transport"/>
    <property type="evidence" value="ECO:0007669"/>
    <property type="project" value="InterPro"/>
</dbReference>
<dbReference type="CDD" id="cd06550">
    <property type="entry name" value="TM_ABC_iron-siderophores_like"/>
    <property type="match status" value="1"/>
</dbReference>
<dbReference type="FunFam" id="1.10.3470.10:FF:000003">
    <property type="entry name" value="Iron ABC transporter permease SitD"/>
    <property type="match status" value="1"/>
</dbReference>
<dbReference type="Gene3D" id="1.10.3470.10">
    <property type="entry name" value="ABC transporter involved in vitamin B12 uptake, BtuC"/>
    <property type="match status" value="1"/>
</dbReference>
<dbReference type="InterPro" id="IPR037294">
    <property type="entry name" value="ABC_BtuC-like"/>
</dbReference>
<dbReference type="InterPro" id="IPR001626">
    <property type="entry name" value="ABC_TroCD"/>
</dbReference>
<dbReference type="PANTHER" id="PTHR30477">
    <property type="entry name" value="ABC-TRANSPORTER METAL-BINDING PROTEIN"/>
    <property type="match status" value="1"/>
</dbReference>
<dbReference type="PANTHER" id="PTHR30477:SF13">
    <property type="entry name" value="IRON TRANSPORT SYSTEM MEMBRANE PROTEIN HI_0360-RELATED"/>
    <property type="match status" value="1"/>
</dbReference>
<dbReference type="Pfam" id="PF00950">
    <property type="entry name" value="ABC-3"/>
    <property type="match status" value="1"/>
</dbReference>
<dbReference type="SUPFAM" id="SSF81345">
    <property type="entry name" value="ABC transporter involved in vitamin B12 uptake, BtuC"/>
    <property type="match status" value="1"/>
</dbReference>
<sequence length="280" mass="30174">MLFLEGLMQYSFLQKALITSVTVGIVSGVIGSFIILRGMSLMGDAISHAVLPGVAISYMMGMNFFIGAATFGIAAALGIGFVNQKSRIKNDTAIGIVFSAFFALGIILISFAKSSTDLYHILFGNVLAVRSSDMWMTIIIAIIVISLVALFYKEFLVSSFDPVMAEAYGLNVKFLHYFLMLLLTLVTVSALQTVGIILVVAMLITPAATAYLLTNKLSKMIVLASTFGAVSAIIGLYFSYIFNLASGAAMVLVATIIFFIAFLFAPKQGLLFSKKREVIE</sequence>
<evidence type="ECO:0000250" key="1"/>
<evidence type="ECO:0000255" key="2"/>
<evidence type="ECO:0000305" key="3"/>
<feature type="chain" id="PRO_0000171152" description="Manganese transport system membrane protein MntC">
    <location>
        <begin position="1"/>
        <end position="280"/>
    </location>
</feature>
<feature type="transmembrane region" description="Helical" evidence="2">
    <location>
        <begin position="16"/>
        <end position="36"/>
    </location>
</feature>
<feature type="transmembrane region" description="Helical" evidence="2">
    <location>
        <begin position="41"/>
        <end position="61"/>
    </location>
</feature>
<feature type="transmembrane region" description="Helical" evidence="2">
    <location>
        <begin position="62"/>
        <end position="82"/>
    </location>
</feature>
<feature type="transmembrane region" description="Helical" evidence="2">
    <location>
        <begin position="92"/>
        <end position="112"/>
    </location>
</feature>
<feature type="transmembrane region" description="Helical" evidence="2">
    <location>
        <begin position="137"/>
        <end position="157"/>
    </location>
</feature>
<feature type="transmembrane region" description="Helical" evidence="2">
    <location>
        <begin position="168"/>
        <end position="188"/>
    </location>
</feature>
<feature type="transmembrane region" description="Helical" evidence="2">
    <location>
        <begin position="193"/>
        <end position="213"/>
    </location>
</feature>
<feature type="transmembrane region" description="Helical" evidence="2">
    <location>
        <begin position="221"/>
        <end position="241"/>
    </location>
</feature>
<feature type="transmembrane region" description="Helical" evidence="2">
    <location>
        <begin position="244"/>
        <end position="264"/>
    </location>
</feature>
<comment type="function">
    <text evidence="1">This protein is probably a component of a manganese permease, a binding protein-dependent, ATP-driven transport system.</text>
</comment>
<comment type="subcellular location">
    <subcellularLocation>
        <location evidence="3">Cell membrane</location>
        <topology evidence="3">Multi-pass membrane protein</topology>
    </subcellularLocation>
</comment>
<comment type="similarity">
    <text evidence="3">Belongs to the ABC-3 integral membrane protein family.</text>
</comment>
<gene>
    <name type="primary">mntC</name>
    <name type="ordered locus">lmo1848</name>
</gene>
<proteinExistence type="inferred from homology"/>
<protein>
    <recommendedName>
        <fullName>Manganese transport system membrane protein MntC</fullName>
    </recommendedName>
</protein>
<organism>
    <name type="scientific">Listeria monocytogenes serovar 1/2a (strain ATCC BAA-679 / EGD-e)</name>
    <dbReference type="NCBI Taxonomy" id="169963"/>
    <lineage>
        <taxon>Bacteria</taxon>
        <taxon>Bacillati</taxon>
        <taxon>Bacillota</taxon>
        <taxon>Bacilli</taxon>
        <taxon>Bacillales</taxon>
        <taxon>Listeriaceae</taxon>
        <taxon>Listeria</taxon>
    </lineage>
</organism>
<name>MNTC_LISMO</name>